<accession>B1JUW3</accession>
<gene>
    <name evidence="1" type="primary">mraZ</name>
    <name type="ordered locus">Bcenmc03_0521</name>
</gene>
<comment type="subunit">
    <text evidence="1">Forms oligomers.</text>
</comment>
<comment type="subcellular location">
    <subcellularLocation>
        <location evidence="1">Cytoplasm</location>
        <location evidence="1">Nucleoid</location>
    </subcellularLocation>
</comment>
<comment type="similarity">
    <text evidence="1">Belongs to the MraZ family.</text>
</comment>
<dbReference type="EMBL" id="CP000958">
    <property type="protein sequence ID" value="ACA89699.1"/>
    <property type="molecule type" value="Genomic_DNA"/>
</dbReference>
<dbReference type="RefSeq" id="WP_006477025.1">
    <property type="nucleotide sequence ID" value="NC_010508.1"/>
</dbReference>
<dbReference type="SMR" id="B1JUW3"/>
<dbReference type="GeneID" id="83047322"/>
<dbReference type="KEGG" id="bcm:Bcenmc03_0521"/>
<dbReference type="HOGENOM" id="CLU_107907_2_1_4"/>
<dbReference type="Proteomes" id="UP000002169">
    <property type="component" value="Chromosome 1"/>
</dbReference>
<dbReference type="GO" id="GO:0005737">
    <property type="term" value="C:cytoplasm"/>
    <property type="evidence" value="ECO:0007669"/>
    <property type="project" value="UniProtKB-UniRule"/>
</dbReference>
<dbReference type="GO" id="GO:0009295">
    <property type="term" value="C:nucleoid"/>
    <property type="evidence" value="ECO:0007669"/>
    <property type="project" value="UniProtKB-SubCell"/>
</dbReference>
<dbReference type="GO" id="GO:0003700">
    <property type="term" value="F:DNA-binding transcription factor activity"/>
    <property type="evidence" value="ECO:0007669"/>
    <property type="project" value="UniProtKB-UniRule"/>
</dbReference>
<dbReference type="GO" id="GO:0000976">
    <property type="term" value="F:transcription cis-regulatory region binding"/>
    <property type="evidence" value="ECO:0007669"/>
    <property type="project" value="TreeGrafter"/>
</dbReference>
<dbReference type="GO" id="GO:2000143">
    <property type="term" value="P:negative regulation of DNA-templated transcription initiation"/>
    <property type="evidence" value="ECO:0007669"/>
    <property type="project" value="TreeGrafter"/>
</dbReference>
<dbReference type="CDD" id="cd16321">
    <property type="entry name" value="MraZ_C"/>
    <property type="match status" value="1"/>
</dbReference>
<dbReference type="CDD" id="cd16320">
    <property type="entry name" value="MraZ_N"/>
    <property type="match status" value="1"/>
</dbReference>
<dbReference type="Gene3D" id="3.40.1550.20">
    <property type="entry name" value="Transcriptional regulator MraZ domain"/>
    <property type="match status" value="1"/>
</dbReference>
<dbReference type="HAMAP" id="MF_01008">
    <property type="entry name" value="MraZ"/>
    <property type="match status" value="1"/>
</dbReference>
<dbReference type="InterPro" id="IPR003444">
    <property type="entry name" value="MraZ"/>
</dbReference>
<dbReference type="InterPro" id="IPR035644">
    <property type="entry name" value="MraZ_C"/>
</dbReference>
<dbReference type="InterPro" id="IPR020603">
    <property type="entry name" value="MraZ_dom"/>
</dbReference>
<dbReference type="InterPro" id="IPR035642">
    <property type="entry name" value="MraZ_N"/>
</dbReference>
<dbReference type="InterPro" id="IPR038619">
    <property type="entry name" value="MraZ_sf"/>
</dbReference>
<dbReference type="InterPro" id="IPR007159">
    <property type="entry name" value="SpoVT-AbrB_dom"/>
</dbReference>
<dbReference type="InterPro" id="IPR037914">
    <property type="entry name" value="SpoVT-AbrB_sf"/>
</dbReference>
<dbReference type="NCBIfam" id="TIGR00242">
    <property type="entry name" value="division/cell wall cluster transcriptional repressor MraZ"/>
    <property type="match status" value="1"/>
</dbReference>
<dbReference type="PANTHER" id="PTHR34701">
    <property type="entry name" value="TRANSCRIPTIONAL REGULATOR MRAZ"/>
    <property type="match status" value="1"/>
</dbReference>
<dbReference type="PANTHER" id="PTHR34701:SF1">
    <property type="entry name" value="TRANSCRIPTIONAL REGULATOR MRAZ"/>
    <property type="match status" value="1"/>
</dbReference>
<dbReference type="Pfam" id="PF02381">
    <property type="entry name" value="MraZ"/>
    <property type="match status" value="2"/>
</dbReference>
<dbReference type="SUPFAM" id="SSF89447">
    <property type="entry name" value="AbrB/MazE/MraZ-like"/>
    <property type="match status" value="1"/>
</dbReference>
<dbReference type="PROSITE" id="PS51740">
    <property type="entry name" value="SPOVT_ABRB"/>
    <property type="match status" value="2"/>
</dbReference>
<proteinExistence type="inferred from homology"/>
<evidence type="ECO:0000255" key="1">
    <source>
        <dbReference type="HAMAP-Rule" id="MF_01008"/>
    </source>
</evidence>
<evidence type="ECO:0000255" key="2">
    <source>
        <dbReference type="PROSITE-ProRule" id="PRU01076"/>
    </source>
</evidence>
<sequence length="142" mass="15885">MFQGASALTLDAKGRMSVPSRYREALQGQAEGRVTVTKHPDGCLLLFPRPEWEVFRAKIAALPMDAHWWRRIFLGNAMDVDLDSAGRILVSPELRMAAGLEKEVMLLGMGSHFELWDSQTYNAKEQAAMAQGMPDALKNFTF</sequence>
<keyword id="KW-0963">Cytoplasm</keyword>
<keyword id="KW-0238">DNA-binding</keyword>
<keyword id="KW-0677">Repeat</keyword>
<keyword id="KW-0804">Transcription</keyword>
<keyword id="KW-0805">Transcription regulation</keyword>
<name>MRAZ_BURO0</name>
<organism>
    <name type="scientific">Burkholderia orbicola (strain MC0-3)</name>
    <dbReference type="NCBI Taxonomy" id="406425"/>
    <lineage>
        <taxon>Bacteria</taxon>
        <taxon>Pseudomonadati</taxon>
        <taxon>Pseudomonadota</taxon>
        <taxon>Betaproteobacteria</taxon>
        <taxon>Burkholderiales</taxon>
        <taxon>Burkholderiaceae</taxon>
        <taxon>Burkholderia</taxon>
        <taxon>Burkholderia cepacia complex</taxon>
        <taxon>Burkholderia orbicola</taxon>
    </lineage>
</organism>
<reference key="1">
    <citation type="submission" date="2008-02" db="EMBL/GenBank/DDBJ databases">
        <title>Complete sequence of chromosome 1 of Burkholderia cenocepacia MC0-3.</title>
        <authorList>
            <person name="Copeland A."/>
            <person name="Lucas S."/>
            <person name="Lapidus A."/>
            <person name="Barry K."/>
            <person name="Bruce D."/>
            <person name="Goodwin L."/>
            <person name="Glavina del Rio T."/>
            <person name="Dalin E."/>
            <person name="Tice H."/>
            <person name="Pitluck S."/>
            <person name="Chain P."/>
            <person name="Malfatti S."/>
            <person name="Shin M."/>
            <person name="Vergez L."/>
            <person name="Schmutz J."/>
            <person name="Larimer F."/>
            <person name="Land M."/>
            <person name="Hauser L."/>
            <person name="Kyrpides N."/>
            <person name="Mikhailova N."/>
            <person name="Tiedje J."/>
            <person name="Richardson P."/>
        </authorList>
    </citation>
    <scope>NUCLEOTIDE SEQUENCE [LARGE SCALE GENOMIC DNA]</scope>
    <source>
        <strain>MC0-3</strain>
    </source>
</reference>
<protein>
    <recommendedName>
        <fullName>Transcriptional regulator MraZ</fullName>
    </recommendedName>
</protein>
<feature type="chain" id="PRO_1000134773" description="Transcriptional regulator MraZ">
    <location>
        <begin position="1"/>
        <end position="142"/>
    </location>
</feature>
<feature type="domain" description="SpoVT-AbrB 1" evidence="2">
    <location>
        <begin position="5"/>
        <end position="51"/>
    </location>
</feature>
<feature type="domain" description="SpoVT-AbrB 2" evidence="2">
    <location>
        <begin position="77"/>
        <end position="120"/>
    </location>
</feature>